<accession>A6H070</accession>
<comment type="function">
    <text evidence="1">Catalyzes the thiamine diphosphate-dependent decarboxylation of 2-oxoglutarate and the subsequent addition of the resulting succinic semialdehyde-thiamine pyrophosphate anion to isochorismate to yield 2-succinyl-5-enolpyruvyl-6-hydroxy-3-cyclohexene-1-carboxylate (SEPHCHC).</text>
</comment>
<comment type="catalytic activity">
    <reaction evidence="1">
        <text>isochorismate + 2-oxoglutarate + H(+) = 5-enolpyruvoyl-6-hydroxy-2-succinyl-cyclohex-3-ene-1-carboxylate + CO2</text>
        <dbReference type="Rhea" id="RHEA:25593"/>
        <dbReference type="ChEBI" id="CHEBI:15378"/>
        <dbReference type="ChEBI" id="CHEBI:16526"/>
        <dbReference type="ChEBI" id="CHEBI:16810"/>
        <dbReference type="ChEBI" id="CHEBI:29780"/>
        <dbReference type="ChEBI" id="CHEBI:58818"/>
        <dbReference type="EC" id="2.2.1.9"/>
    </reaction>
</comment>
<comment type="cofactor">
    <cofactor evidence="1">
        <name>Mg(2+)</name>
        <dbReference type="ChEBI" id="CHEBI:18420"/>
    </cofactor>
    <cofactor evidence="1">
        <name>Mn(2+)</name>
        <dbReference type="ChEBI" id="CHEBI:29035"/>
    </cofactor>
</comment>
<comment type="cofactor">
    <cofactor evidence="1">
        <name>thiamine diphosphate</name>
        <dbReference type="ChEBI" id="CHEBI:58937"/>
    </cofactor>
    <text evidence="1">Binds 1 thiamine pyrophosphate per subunit.</text>
</comment>
<comment type="pathway">
    <text evidence="1">Quinol/quinone metabolism; 1,4-dihydroxy-2-naphthoate biosynthesis; 1,4-dihydroxy-2-naphthoate from chorismate: step 2/7.</text>
</comment>
<comment type="pathway">
    <text evidence="1">Quinol/quinone metabolism; menaquinone biosynthesis.</text>
</comment>
<comment type="subunit">
    <text evidence="1">Homodimer.</text>
</comment>
<comment type="similarity">
    <text evidence="1">Belongs to the TPP enzyme family. MenD subfamily.</text>
</comment>
<name>MEND_FLAPJ</name>
<protein>
    <recommendedName>
        <fullName evidence="1">2-succinyl-5-enolpyruvyl-6-hydroxy-3-cyclohexene-1-carboxylate synthase</fullName>
        <shortName evidence="1">SEPHCHC synthase</shortName>
        <ecNumber evidence="1">2.2.1.9</ecNumber>
    </recommendedName>
    <alternativeName>
        <fullName evidence="1">Menaquinone biosynthesis protein MenD</fullName>
    </alternativeName>
</protein>
<reference key="1">
    <citation type="journal article" date="2007" name="Nat. Biotechnol.">
        <title>Complete genome sequence of the fish pathogen Flavobacterium psychrophilum.</title>
        <authorList>
            <person name="Duchaud E."/>
            <person name="Boussaha M."/>
            <person name="Loux V."/>
            <person name="Bernardet J.-F."/>
            <person name="Michel C."/>
            <person name="Kerouault B."/>
            <person name="Mondot S."/>
            <person name="Nicolas P."/>
            <person name="Bossy R."/>
            <person name="Caron C."/>
            <person name="Bessieres P."/>
            <person name="Gibrat J.-F."/>
            <person name="Claverol S."/>
            <person name="Dumetz F."/>
            <person name="Le Henaff M."/>
            <person name="Benmansour A."/>
        </authorList>
    </citation>
    <scope>NUCLEOTIDE SEQUENCE [LARGE SCALE GENOMIC DNA]</scope>
    <source>
        <strain>ATCC 49511 / DSM 21280 / CIP 103535 / JIP02/86</strain>
    </source>
</reference>
<keyword id="KW-0460">Magnesium</keyword>
<keyword id="KW-0464">Manganese</keyword>
<keyword id="KW-0474">Menaquinone biosynthesis</keyword>
<keyword id="KW-0479">Metal-binding</keyword>
<keyword id="KW-1185">Reference proteome</keyword>
<keyword id="KW-0786">Thiamine pyrophosphate</keyword>
<keyword id="KW-0808">Transferase</keyword>
<dbReference type="EC" id="2.2.1.9" evidence="1"/>
<dbReference type="EMBL" id="AM398681">
    <property type="protein sequence ID" value="CAL43743.1"/>
    <property type="molecule type" value="Genomic_DNA"/>
</dbReference>
<dbReference type="RefSeq" id="WP_011963786.1">
    <property type="nucleotide sequence ID" value="NC_009613.3"/>
</dbReference>
<dbReference type="RefSeq" id="YP_001296550.1">
    <property type="nucleotide sequence ID" value="NC_009613.3"/>
</dbReference>
<dbReference type="SMR" id="A6H070"/>
<dbReference type="STRING" id="402612.FP1676"/>
<dbReference type="EnsemblBacteria" id="CAL43743">
    <property type="protein sequence ID" value="CAL43743"/>
    <property type="gene ID" value="FP1676"/>
</dbReference>
<dbReference type="GeneID" id="66552137"/>
<dbReference type="KEGG" id="fps:FP1676"/>
<dbReference type="PATRIC" id="fig|402612.5.peg.1690"/>
<dbReference type="eggNOG" id="COG1165">
    <property type="taxonomic scope" value="Bacteria"/>
</dbReference>
<dbReference type="HOGENOM" id="CLU_006051_3_0_10"/>
<dbReference type="OrthoDB" id="9791859at2"/>
<dbReference type="UniPathway" id="UPA00079"/>
<dbReference type="UniPathway" id="UPA01057">
    <property type="reaction ID" value="UER00164"/>
</dbReference>
<dbReference type="Proteomes" id="UP000006394">
    <property type="component" value="Chromosome"/>
</dbReference>
<dbReference type="GO" id="GO:0070204">
    <property type="term" value="F:2-succinyl-5-enolpyruvyl-6-hydroxy-3-cyclohexene-1-carboxylic-acid synthase activity"/>
    <property type="evidence" value="ECO:0007669"/>
    <property type="project" value="UniProtKB-UniRule"/>
</dbReference>
<dbReference type="GO" id="GO:0000287">
    <property type="term" value="F:magnesium ion binding"/>
    <property type="evidence" value="ECO:0007669"/>
    <property type="project" value="UniProtKB-UniRule"/>
</dbReference>
<dbReference type="GO" id="GO:0030145">
    <property type="term" value="F:manganese ion binding"/>
    <property type="evidence" value="ECO:0007669"/>
    <property type="project" value="UniProtKB-UniRule"/>
</dbReference>
<dbReference type="GO" id="GO:0030976">
    <property type="term" value="F:thiamine pyrophosphate binding"/>
    <property type="evidence" value="ECO:0007669"/>
    <property type="project" value="UniProtKB-UniRule"/>
</dbReference>
<dbReference type="GO" id="GO:0009234">
    <property type="term" value="P:menaquinone biosynthetic process"/>
    <property type="evidence" value="ECO:0007669"/>
    <property type="project" value="UniProtKB-UniRule"/>
</dbReference>
<dbReference type="CDD" id="cd07037">
    <property type="entry name" value="TPP_PYR_MenD"/>
    <property type="match status" value="1"/>
</dbReference>
<dbReference type="CDD" id="cd02009">
    <property type="entry name" value="TPP_SHCHC_synthase"/>
    <property type="match status" value="1"/>
</dbReference>
<dbReference type="Gene3D" id="3.40.50.970">
    <property type="match status" value="2"/>
</dbReference>
<dbReference type="Gene3D" id="3.40.50.1220">
    <property type="entry name" value="TPP-binding domain"/>
    <property type="match status" value="1"/>
</dbReference>
<dbReference type="HAMAP" id="MF_01659">
    <property type="entry name" value="MenD"/>
    <property type="match status" value="1"/>
</dbReference>
<dbReference type="InterPro" id="IPR004433">
    <property type="entry name" value="MenaQ_synth_MenD"/>
</dbReference>
<dbReference type="InterPro" id="IPR029061">
    <property type="entry name" value="THDP-binding"/>
</dbReference>
<dbReference type="InterPro" id="IPR012001">
    <property type="entry name" value="Thiamin_PyroP_enz_TPP-bd_dom"/>
</dbReference>
<dbReference type="InterPro" id="IPR011766">
    <property type="entry name" value="TPP_enzyme_TPP-bd"/>
</dbReference>
<dbReference type="NCBIfam" id="TIGR00173">
    <property type="entry name" value="menD"/>
    <property type="match status" value="1"/>
</dbReference>
<dbReference type="PANTHER" id="PTHR42916">
    <property type="entry name" value="2-SUCCINYL-5-ENOLPYRUVYL-6-HYDROXY-3-CYCLOHEXENE-1-CARBOXYLATE SYNTHASE"/>
    <property type="match status" value="1"/>
</dbReference>
<dbReference type="PANTHER" id="PTHR42916:SF1">
    <property type="entry name" value="PROTEIN PHYLLO, CHLOROPLASTIC"/>
    <property type="match status" value="1"/>
</dbReference>
<dbReference type="Pfam" id="PF02775">
    <property type="entry name" value="TPP_enzyme_C"/>
    <property type="match status" value="1"/>
</dbReference>
<dbReference type="Pfam" id="PF02776">
    <property type="entry name" value="TPP_enzyme_N"/>
    <property type="match status" value="1"/>
</dbReference>
<dbReference type="PIRSF" id="PIRSF004983">
    <property type="entry name" value="MenD"/>
    <property type="match status" value="1"/>
</dbReference>
<dbReference type="SUPFAM" id="SSF52518">
    <property type="entry name" value="Thiamin diphosphate-binding fold (THDP-binding)"/>
    <property type="match status" value="2"/>
</dbReference>
<feature type="chain" id="PRO_0000341748" description="2-succinyl-5-enolpyruvyl-6-hydroxy-3-cyclohexene-1-carboxylate synthase">
    <location>
        <begin position="1"/>
        <end position="550"/>
    </location>
</feature>
<proteinExistence type="inferred from homology"/>
<gene>
    <name evidence="1" type="primary">menD</name>
    <name type="ordered locus">FP1676</name>
</gene>
<organism>
    <name type="scientific">Flavobacterium psychrophilum (strain ATCC 49511 / DSM 21280 / CIP 103535 / JIP02/86)</name>
    <dbReference type="NCBI Taxonomy" id="402612"/>
    <lineage>
        <taxon>Bacteria</taxon>
        <taxon>Pseudomonadati</taxon>
        <taxon>Bacteroidota</taxon>
        <taxon>Flavobacteriia</taxon>
        <taxon>Flavobacteriales</taxon>
        <taxon>Flavobacteriaceae</taxon>
        <taxon>Flavobacterium</taxon>
    </lineage>
</organism>
<evidence type="ECO:0000255" key="1">
    <source>
        <dbReference type="HAMAP-Rule" id="MF_01659"/>
    </source>
</evidence>
<sequence>MIYPKIPLAQSIIEICNTKGLHHIVISPGSRNAPLTIGFTNNPVFTCYSIADERCAAFFALGIAQQLKKPVALVCTSGSALLNYYPAFAEAFYSQIPLVVISADRPQSKIDIGDGQTIRQENVFANHSLYNANLVENVSEENDAKIQEAIHLATTKKGPVHINVPFEEPLYETVDTISVNTKIIDFDTENKPLENLDVFVNRWNDAKKKLILIGGCDPNVIQQFIIDFLANDTSVVVMTEVTSNVHHANFITNIDAIITPFTDDDFTNFQPEILITMGGMIVSKRIKAFLRKYKPQQHWHIDELRAYDTFGSLTKHFEVLPSVFFKEFIPKINSLESNYLPYSLEIKKVRTQKTNTYLATIPFSDFKAFEIILPKLPLYSQLQISNSSAIRYAQLFSIHSSIEVFCNRGTSGIDGSTSTAIGAAIASGKETILITGDISFLYDSNALWNNYIPENFKIILLNNGGGGIFRILPGHKENETFNTYFETSHRLTAKYLAKMYNFGYEKAVDEKTLAEKLKITINTKKSIILEVFTPTKVNDLVLLNYFKNLT</sequence>